<comment type="function">
    <text evidence="1">Catalyzes the phosphorylation of D-glycero-D-manno-heptose 7-phosphate at the C-1 position to selectively form D-glycero-beta-D-manno-heptose-1,7-bisphosphate.</text>
</comment>
<comment type="function">
    <text evidence="1">Catalyzes the ADP transfer from ATP to D-glycero-beta-D-manno-heptose 1-phosphate, yielding ADP-D-glycero-beta-D-manno-heptose.</text>
</comment>
<comment type="catalytic activity">
    <reaction evidence="1">
        <text>D-glycero-beta-D-manno-heptose 7-phosphate + ATP = D-glycero-beta-D-manno-heptose 1,7-bisphosphate + ADP + H(+)</text>
        <dbReference type="Rhea" id="RHEA:27473"/>
        <dbReference type="ChEBI" id="CHEBI:15378"/>
        <dbReference type="ChEBI" id="CHEBI:30616"/>
        <dbReference type="ChEBI" id="CHEBI:60204"/>
        <dbReference type="ChEBI" id="CHEBI:60208"/>
        <dbReference type="ChEBI" id="CHEBI:456216"/>
        <dbReference type="EC" id="2.7.1.167"/>
    </reaction>
</comment>
<comment type="catalytic activity">
    <reaction evidence="1">
        <text>D-glycero-beta-D-manno-heptose 1-phosphate + ATP + H(+) = ADP-D-glycero-beta-D-manno-heptose + diphosphate</text>
        <dbReference type="Rhea" id="RHEA:27465"/>
        <dbReference type="ChEBI" id="CHEBI:15378"/>
        <dbReference type="ChEBI" id="CHEBI:30616"/>
        <dbReference type="ChEBI" id="CHEBI:33019"/>
        <dbReference type="ChEBI" id="CHEBI:59967"/>
        <dbReference type="ChEBI" id="CHEBI:61593"/>
        <dbReference type="EC" id="2.7.7.70"/>
    </reaction>
</comment>
<comment type="pathway">
    <text evidence="1">Nucleotide-sugar biosynthesis; ADP-L-glycero-beta-D-manno-heptose biosynthesis; ADP-L-glycero-beta-D-manno-heptose from D-glycero-beta-D-manno-heptose 7-phosphate: step 1/4.</text>
</comment>
<comment type="pathway">
    <text evidence="1">Nucleotide-sugar biosynthesis; ADP-L-glycero-beta-D-manno-heptose biosynthesis; ADP-L-glycero-beta-D-manno-heptose from D-glycero-beta-D-manno-heptose 7-phosphate: step 3/4.</text>
</comment>
<comment type="subunit">
    <text evidence="1">Homodimer.</text>
</comment>
<comment type="similarity">
    <text evidence="1">In the N-terminal section; belongs to the carbohydrate kinase PfkB family.</text>
</comment>
<comment type="similarity">
    <text evidence="1">In the C-terminal section; belongs to the cytidylyltransferase family.</text>
</comment>
<feature type="chain" id="PRO_1000185827" description="Bifunctional protein HldE">
    <location>
        <begin position="1"/>
        <end position="476"/>
    </location>
</feature>
<feature type="region of interest" description="Ribokinase">
    <location>
        <begin position="1"/>
        <end position="318"/>
    </location>
</feature>
<feature type="region of interest" description="Cytidylyltransferase">
    <location>
        <begin position="344"/>
        <end position="476"/>
    </location>
</feature>
<feature type="active site" evidence="1">
    <location>
        <position position="264"/>
    </location>
</feature>
<feature type="binding site" evidence="1">
    <location>
        <begin position="195"/>
        <end position="198"/>
    </location>
    <ligand>
        <name>ATP</name>
        <dbReference type="ChEBI" id="CHEBI:30616"/>
    </ligand>
</feature>
<dbReference type="EC" id="2.7.1.167" evidence="1"/>
<dbReference type="EC" id="2.7.7.70" evidence="1"/>
<dbReference type="EMBL" id="FM954972">
    <property type="protein sequence ID" value="CAV17425.1"/>
    <property type="molecule type" value="Genomic_DNA"/>
</dbReference>
<dbReference type="SMR" id="B7VIX1"/>
<dbReference type="STRING" id="575788.VS_0417"/>
<dbReference type="KEGG" id="vsp:VS_0417"/>
<dbReference type="PATRIC" id="fig|575788.5.peg.1783"/>
<dbReference type="eggNOG" id="COG0615">
    <property type="taxonomic scope" value="Bacteria"/>
</dbReference>
<dbReference type="eggNOG" id="COG2870">
    <property type="taxonomic scope" value="Bacteria"/>
</dbReference>
<dbReference type="HOGENOM" id="CLU_021150_2_1_6"/>
<dbReference type="UniPathway" id="UPA00356">
    <property type="reaction ID" value="UER00437"/>
</dbReference>
<dbReference type="UniPathway" id="UPA00356">
    <property type="reaction ID" value="UER00439"/>
</dbReference>
<dbReference type="Proteomes" id="UP000009100">
    <property type="component" value="Chromosome 1"/>
</dbReference>
<dbReference type="GO" id="GO:0005829">
    <property type="term" value="C:cytosol"/>
    <property type="evidence" value="ECO:0007669"/>
    <property type="project" value="TreeGrafter"/>
</dbReference>
<dbReference type="GO" id="GO:0005524">
    <property type="term" value="F:ATP binding"/>
    <property type="evidence" value="ECO:0007669"/>
    <property type="project" value="UniProtKB-UniRule"/>
</dbReference>
<dbReference type="GO" id="GO:0033785">
    <property type="term" value="F:heptose 7-phosphate kinase activity"/>
    <property type="evidence" value="ECO:0007669"/>
    <property type="project" value="UniProtKB-UniRule"/>
</dbReference>
<dbReference type="GO" id="GO:0033786">
    <property type="term" value="F:heptose-1-phosphate adenylyltransferase activity"/>
    <property type="evidence" value="ECO:0007669"/>
    <property type="project" value="UniProtKB-UniRule"/>
</dbReference>
<dbReference type="GO" id="GO:0016773">
    <property type="term" value="F:phosphotransferase activity, alcohol group as acceptor"/>
    <property type="evidence" value="ECO:0007669"/>
    <property type="project" value="InterPro"/>
</dbReference>
<dbReference type="GO" id="GO:0097171">
    <property type="term" value="P:ADP-L-glycero-beta-D-manno-heptose biosynthetic process"/>
    <property type="evidence" value="ECO:0007669"/>
    <property type="project" value="UniProtKB-UniPathway"/>
</dbReference>
<dbReference type="CDD" id="cd01172">
    <property type="entry name" value="RfaE_like"/>
    <property type="match status" value="1"/>
</dbReference>
<dbReference type="FunFam" id="3.40.1190.20:FF:000002">
    <property type="entry name" value="Bifunctional protein HldE"/>
    <property type="match status" value="1"/>
</dbReference>
<dbReference type="FunFam" id="3.40.50.620:FF:000028">
    <property type="entry name" value="Bifunctional protein HldE"/>
    <property type="match status" value="1"/>
</dbReference>
<dbReference type="Gene3D" id="3.40.1190.20">
    <property type="match status" value="1"/>
</dbReference>
<dbReference type="Gene3D" id="3.40.50.620">
    <property type="entry name" value="HUPs"/>
    <property type="match status" value="1"/>
</dbReference>
<dbReference type="HAMAP" id="MF_01603">
    <property type="entry name" value="HldE"/>
    <property type="match status" value="1"/>
</dbReference>
<dbReference type="InterPro" id="IPR023030">
    <property type="entry name" value="Bifunc_HldE"/>
</dbReference>
<dbReference type="InterPro" id="IPR002173">
    <property type="entry name" value="Carboh/pur_kinase_PfkB_CS"/>
</dbReference>
<dbReference type="InterPro" id="IPR004821">
    <property type="entry name" value="Cyt_trans-like"/>
</dbReference>
<dbReference type="InterPro" id="IPR011611">
    <property type="entry name" value="PfkB_dom"/>
</dbReference>
<dbReference type="InterPro" id="IPR011913">
    <property type="entry name" value="RfaE_dom_I"/>
</dbReference>
<dbReference type="InterPro" id="IPR011914">
    <property type="entry name" value="RfaE_dom_II"/>
</dbReference>
<dbReference type="InterPro" id="IPR029056">
    <property type="entry name" value="Ribokinase-like"/>
</dbReference>
<dbReference type="InterPro" id="IPR014729">
    <property type="entry name" value="Rossmann-like_a/b/a_fold"/>
</dbReference>
<dbReference type="NCBIfam" id="TIGR00125">
    <property type="entry name" value="cyt_tran_rel"/>
    <property type="match status" value="1"/>
</dbReference>
<dbReference type="NCBIfam" id="NF008454">
    <property type="entry name" value="PRK11316.1"/>
    <property type="match status" value="1"/>
</dbReference>
<dbReference type="NCBIfam" id="TIGR02198">
    <property type="entry name" value="rfaE_dom_I"/>
    <property type="match status" value="1"/>
</dbReference>
<dbReference type="NCBIfam" id="TIGR02199">
    <property type="entry name" value="rfaE_dom_II"/>
    <property type="match status" value="1"/>
</dbReference>
<dbReference type="PANTHER" id="PTHR46969">
    <property type="entry name" value="BIFUNCTIONAL PROTEIN HLDE"/>
    <property type="match status" value="1"/>
</dbReference>
<dbReference type="PANTHER" id="PTHR46969:SF1">
    <property type="entry name" value="BIFUNCTIONAL PROTEIN HLDE"/>
    <property type="match status" value="1"/>
</dbReference>
<dbReference type="Pfam" id="PF01467">
    <property type="entry name" value="CTP_transf_like"/>
    <property type="match status" value="1"/>
</dbReference>
<dbReference type="Pfam" id="PF00294">
    <property type="entry name" value="PfkB"/>
    <property type="match status" value="1"/>
</dbReference>
<dbReference type="SUPFAM" id="SSF52374">
    <property type="entry name" value="Nucleotidylyl transferase"/>
    <property type="match status" value="1"/>
</dbReference>
<dbReference type="SUPFAM" id="SSF53613">
    <property type="entry name" value="Ribokinase-like"/>
    <property type="match status" value="1"/>
</dbReference>
<dbReference type="PROSITE" id="PS00583">
    <property type="entry name" value="PFKB_KINASES_1"/>
    <property type="match status" value="1"/>
</dbReference>
<evidence type="ECO:0000255" key="1">
    <source>
        <dbReference type="HAMAP-Rule" id="MF_01603"/>
    </source>
</evidence>
<proteinExistence type="inferred from homology"/>
<name>HLDE_VIBA3</name>
<accession>B7VIX1</accession>
<protein>
    <recommendedName>
        <fullName evidence="1">Bifunctional protein HldE</fullName>
    </recommendedName>
    <domain>
        <recommendedName>
            <fullName evidence="1">D-beta-D-heptose 7-phosphate kinase</fullName>
            <ecNumber evidence="1">2.7.1.167</ecNumber>
        </recommendedName>
        <alternativeName>
            <fullName evidence="1">D-beta-D-heptose 7-phosphotransferase</fullName>
        </alternativeName>
        <alternativeName>
            <fullName evidence="1">D-glycero-beta-D-manno-heptose-7-phosphate kinase</fullName>
        </alternativeName>
    </domain>
    <domain>
        <recommendedName>
            <fullName evidence="1">D-beta-D-heptose 1-phosphate adenylyltransferase</fullName>
            <ecNumber evidence="1">2.7.7.70</ecNumber>
        </recommendedName>
        <alternativeName>
            <fullName evidence="1">D-glycero-beta-D-manno-heptose 1-phosphate adenylyltransferase</fullName>
        </alternativeName>
    </domain>
</protein>
<reference key="1">
    <citation type="submission" date="2009-02" db="EMBL/GenBank/DDBJ databases">
        <title>Vibrio splendidus str. LGP32 complete genome.</title>
        <authorList>
            <person name="Mazel D."/>
            <person name="Le Roux F."/>
        </authorList>
    </citation>
    <scope>NUCLEOTIDE SEQUENCE [LARGE SCALE GENOMIC DNA]</scope>
    <source>
        <strain>LGP32</strain>
    </source>
</reference>
<gene>
    <name evidence="1" type="primary">hldE</name>
    <name type="ordered locus">VS_0417</name>
</gene>
<sequence length="476" mass="50904">MKPILPDYSQSGVLVVGDVMLDRYWYGPTGRISPEAPVPVVKVENNEERPGGAANVAMNIASLGGHAHIVGLTGKDEPAEVLKNTLGALKVKCDFVELDDYPTITKLRVMSRGQQLIRLDFEDKFENTDPELVLSRMEQALPNVRSVILSDYAKGALEHVQSFIQKARAANVPVFIDPKGADFERYRGATLLTPNMAEFELVAGKVKSEDEMIEKGLALIEEFDFEALLVTRSEHGMTLLRKGVEPFHLPTQAKEVYDVTGAGDTVISVLAASVAAGKPLDEACALANAAAGVVVGKLGTSTLSTIELAEAIHGSQDTDYGVISEAALVEAVKRARAKGEKVVMTNGCFDILHAGHVSYMNHAAELGDRLIVAVNTDESVKRLKGPGRPVNPTDRRMAVLAGLGAVDWVVPFSEDTPQRLISEVLPSILVKGGDYKPEEIAGGAEVIAAGGEVKVLNFEDGCSTTEIIKAIKGGRG</sequence>
<organism>
    <name type="scientific">Vibrio atlanticus (strain LGP32)</name>
    <name type="common">Vibrio splendidus (strain Mel32)</name>
    <dbReference type="NCBI Taxonomy" id="575788"/>
    <lineage>
        <taxon>Bacteria</taxon>
        <taxon>Pseudomonadati</taxon>
        <taxon>Pseudomonadota</taxon>
        <taxon>Gammaproteobacteria</taxon>
        <taxon>Vibrionales</taxon>
        <taxon>Vibrionaceae</taxon>
        <taxon>Vibrio</taxon>
    </lineage>
</organism>
<keyword id="KW-0067">ATP-binding</keyword>
<keyword id="KW-0119">Carbohydrate metabolism</keyword>
<keyword id="KW-0418">Kinase</keyword>
<keyword id="KW-0511">Multifunctional enzyme</keyword>
<keyword id="KW-0547">Nucleotide-binding</keyword>
<keyword id="KW-0548">Nucleotidyltransferase</keyword>
<keyword id="KW-0808">Transferase</keyword>